<protein>
    <recommendedName>
        <fullName evidence="1">Acetylglutamate kinase</fullName>
        <ecNumber evidence="1">2.7.2.8</ecNumber>
    </recommendedName>
    <alternativeName>
        <fullName evidence="1">N-acetyl-L-glutamate 5-phosphotransferase</fullName>
    </alternativeName>
    <alternativeName>
        <fullName evidence="1">NAG kinase</fullName>
        <shortName evidence="1">NAGK</shortName>
    </alternativeName>
</protein>
<evidence type="ECO:0000255" key="1">
    <source>
        <dbReference type="HAMAP-Rule" id="MF_00082"/>
    </source>
</evidence>
<keyword id="KW-0028">Amino-acid biosynthesis</keyword>
<keyword id="KW-0055">Arginine biosynthesis</keyword>
<keyword id="KW-0067">ATP-binding</keyword>
<keyword id="KW-0963">Cytoplasm</keyword>
<keyword id="KW-0418">Kinase</keyword>
<keyword id="KW-0547">Nucleotide-binding</keyword>
<keyword id="KW-1185">Reference proteome</keyword>
<keyword id="KW-0808">Transferase</keyword>
<dbReference type="EC" id="2.7.2.8" evidence="1"/>
<dbReference type="EMBL" id="CP000141">
    <property type="protein sequence ID" value="ABB14397.1"/>
    <property type="molecule type" value="Genomic_DNA"/>
</dbReference>
<dbReference type="RefSeq" id="WP_011345145.1">
    <property type="nucleotide sequence ID" value="NC_007503.1"/>
</dbReference>
<dbReference type="SMR" id="Q3A9W2"/>
<dbReference type="FunCoup" id="Q3A9W2">
    <property type="interactions" value="427"/>
</dbReference>
<dbReference type="STRING" id="246194.CHY_2263"/>
<dbReference type="KEGG" id="chy:CHY_2263"/>
<dbReference type="eggNOG" id="COG0548">
    <property type="taxonomic scope" value="Bacteria"/>
</dbReference>
<dbReference type="HOGENOM" id="CLU_053680_0_0_9"/>
<dbReference type="InParanoid" id="Q3A9W2"/>
<dbReference type="OrthoDB" id="9803155at2"/>
<dbReference type="UniPathway" id="UPA00068">
    <property type="reaction ID" value="UER00107"/>
</dbReference>
<dbReference type="Proteomes" id="UP000002706">
    <property type="component" value="Chromosome"/>
</dbReference>
<dbReference type="GO" id="GO:0005737">
    <property type="term" value="C:cytoplasm"/>
    <property type="evidence" value="ECO:0007669"/>
    <property type="project" value="UniProtKB-SubCell"/>
</dbReference>
<dbReference type="GO" id="GO:0003991">
    <property type="term" value="F:acetylglutamate kinase activity"/>
    <property type="evidence" value="ECO:0007669"/>
    <property type="project" value="UniProtKB-UniRule"/>
</dbReference>
<dbReference type="GO" id="GO:0005524">
    <property type="term" value="F:ATP binding"/>
    <property type="evidence" value="ECO:0007669"/>
    <property type="project" value="UniProtKB-UniRule"/>
</dbReference>
<dbReference type="GO" id="GO:0042450">
    <property type="term" value="P:arginine biosynthetic process via ornithine"/>
    <property type="evidence" value="ECO:0007669"/>
    <property type="project" value="UniProtKB-UniRule"/>
</dbReference>
<dbReference type="GO" id="GO:0006526">
    <property type="term" value="P:L-arginine biosynthetic process"/>
    <property type="evidence" value="ECO:0007669"/>
    <property type="project" value="UniProtKB-UniPathway"/>
</dbReference>
<dbReference type="CDD" id="cd04250">
    <property type="entry name" value="AAK_NAGK-C"/>
    <property type="match status" value="1"/>
</dbReference>
<dbReference type="FunFam" id="3.40.1160.10:FF:000004">
    <property type="entry name" value="Acetylglutamate kinase"/>
    <property type="match status" value="1"/>
</dbReference>
<dbReference type="Gene3D" id="3.40.1160.10">
    <property type="entry name" value="Acetylglutamate kinase-like"/>
    <property type="match status" value="1"/>
</dbReference>
<dbReference type="HAMAP" id="MF_00082">
    <property type="entry name" value="ArgB"/>
    <property type="match status" value="1"/>
</dbReference>
<dbReference type="InterPro" id="IPR036393">
    <property type="entry name" value="AceGlu_kinase-like_sf"/>
</dbReference>
<dbReference type="InterPro" id="IPR004662">
    <property type="entry name" value="AcgluKinase_fam"/>
</dbReference>
<dbReference type="InterPro" id="IPR037528">
    <property type="entry name" value="ArgB"/>
</dbReference>
<dbReference type="InterPro" id="IPR001048">
    <property type="entry name" value="Asp/Glu/Uridylate_kinase"/>
</dbReference>
<dbReference type="InterPro" id="IPR001057">
    <property type="entry name" value="Glu/AcGlu_kinase"/>
</dbReference>
<dbReference type="InterPro" id="IPR041727">
    <property type="entry name" value="NAGK-C"/>
</dbReference>
<dbReference type="NCBIfam" id="TIGR00761">
    <property type="entry name" value="argB"/>
    <property type="match status" value="1"/>
</dbReference>
<dbReference type="PANTHER" id="PTHR23342">
    <property type="entry name" value="N-ACETYLGLUTAMATE SYNTHASE"/>
    <property type="match status" value="1"/>
</dbReference>
<dbReference type="PANTHER" id="PTHR23342:SF0">
    <property type="entry name" value="N-ACETYLGLUTAMATE SYNTHASE, MITOCHONDRIAL"/>
    <property type="match status" value="1"/>
</dbReference>
<dbReference type="Pfam" id="PF00696">
    <property type="entry name" value="AA_kinase"/>
    <property type="match status" value="1"/>
</dbReference>
<dbReference type="PIRSF" id="PIRSF000728">
    <property type="entry name" value="NAGK"/>
    <property type="match status" value="1"/>
</dbReference>
<dbReference type="PRINTS" id="PR00474">
    <property type="entry name" value="GLU5KINASE"/>
</dbReference>
<dbReference type="SUPFAM" id="SSF53633">
    <property type="entry name" value="Carbamate kinase-like"/>
    <property type="match status" value="1"/>
</dbReference>
<gene>
    <name evidence="1" type="primary">argB</name>
    <name type="ordered locus">CHY_2263</name>
</gene>
<organism>
    <name type="scientific">Carboxydothermus hydrogenoformans (strain ATCC BAA-161 / DSM 6008 / Z-2901)</name>
    <dbReference type="NCBI Taxonomy" id="246194"/>
    <lineage>
        <taxon>Bacteria</taxon>
        <taxon>Bacillati</taxon>
        <taxon>Bacillota</taxon>
        <taxon>Clostridia</taxon>
        <taxon>Thermoanaerobacterales</taxon>
        <taxon>Thermoanaerobacteraceae</taxon>
        <taxon>Carboxydothermus</taxon>
    </lineage>
</organism>
<accession>Q3A9W2</accession>
<proteinExistence type="inferred from homology"/>
<comment type="function">
    <text evidence="1">Catalyzes the ATP-dependent phosphorylation of N-acetyl-L-glutamate.</text>
</comment>
<comment type="catalytic activity">
    <reaction evidence="1">
        <text>N-acetyl-L-glutamate + ATP = N-acetyl-L-glutamyl 5-phosphate + ADP</text>
        <dbReference type="Rhea" id="RHEA:14629"/>
        <dbReference type="ChEBI" id="CHEBI:30616"/>
        <dbReference type="ChEBI" id="CHEBI:44337"/>
        <dbReference type="ChEBI" id="CHEBI:57936"/>
        <dbReference type="ChEBI" id="CHEBI:456216"/>
        <dbReference type="EC" id="2.7.2.8"/>
    </reaction>
</comment>
<comment type="pathway">
    <text evidence="1">Amino-acid biosynthesis; L-arginine biosynthesis; N(2)-acetyl-L-ornithine from L-glutamate: step 2/4.</text>
</comment>
<comment type="subcellular location">
    <subcellularLocation>
        <location evidence="1">Cytoplasm</location>
    </subcellularLocation>
</comment>
<comment type="similarity">
    <text evidence="1">Belongs to the acetylglutamate kinase family. ArgB subfamily.</text>
</comment>
<reference key="1">
    <citation type="journal article" date="2005" name="PLoS Genet.">
        <title>Life in hot carbon monoxide: the complete genome sequence of Carboxydothermus hydrogenoformans Z-2901.</title>
        <authorList>
            <person name="Wu M."/>
            <person name="Ren Q."/>
            <person name="Durkin A.S."/>
            <person name="Daugherty S.C."/>
            <person name="Brinkac L.M."/>
            <person name="Dodson R.J."/>
            <person name="Madupu R."/>
            <person name="Sullivan S.A."/>
            <person name="Kolonay J.F."/>
            <person name="Nelson W.C."/>
            <person name="Tallon L.J."/>
            <person name="Jones K.M."/>
            <person name="Ulrich L.E."/>
            <person name="Gonzalez J.M."/>
            <person name="Zhulin I.B."/>
            <person name="Robb F.T."/>
            <person name="Eisen J.A."/>
        </authorList>
    </citation>
    <scope>NUCLEOTIDE SEQUENCE [LARGE SCALE GENOMIC DNA]</scope>
    <source>
        <strain>ATCC BAA-161 / DSM 6008 / Z-2901</strain>
    </source>
</reference>
<name>ARGB_CARHZ</name>
<sequence length="294" mass="31431">MEKYLEKTKVLIEALPYIKKFYGKTIVIKYGGHAMVSDQLKEAVINDLVLMKFVGINPVVVHGGGPEISRMLNKLNIKSNFINGLRVTDEATLEVVEMVLVGKVNKEIVGLIEKAGGKAVGLSGKDAGLIKAHKKLAKNPEPTGEEYLDLGYVGEISEVNPEILLTLIDKGYIPVVAPVGSNGSGEFYNINADEVAAEVAVALKADKLIVLTDTPGILLNEKDENSLLSKATIAEVKELINRGVIRGGMIPKAESAISAIKRGVGSVHIIDGRIAHSLLLEIFTDAGVGTMLTP</sequence>
<feature type="chain" id="PRO_0000264691" description="Acetylglutamate kinase">
    <location>
        <begin position="1"/>
        <end position="294"/>
    </location>
</feature>
<feature type="binding site" evidence="1">
    <location>
        <begin position="64"/>
        <end position="65"/>
    </location>
    <ligand>
        <name>substrate</name>
    </ligand>
</feature>
<feature type="binding site" evidence="1">
    <location>
        <position position="86"/>
    </location>
    <ligand>
        <name>substrate</name>
    </ligand>
</feature>
<feature type="binding site" evidence="1">
    <location>
        <position position="189"/>
    </location>
    <ligand>
        <name>substrate</name>
    </ligand>
</feature>
<feature type="site" description="Transition state stabilizer" evidence="1">
    <location>
        <position position="29"/>
    </location>
</feature>
<feature type="site" description="Transition state stabilizer" evidence="1">
    <location>
        <position position="252"/>
    </location>
</feature>